<evidence type="ECO:0000250" key="1"/>
<evidence type="ECO:0000255" key="2"/>
<evidence type="ECO:0000305" key="3"/>
<reference key="1">
    <citation type="journal article" date="1996" name="Arch. Virol.">
        <title>Restriction endonuclease mapping and molecular cloning of the human herpesvirus 6 variant B strain Z29 genome.</title>
        <authorList>
            <person name="Lindquester G.J."/>
            <person name="Inoue N."/>
            <person name="Allen R.D."/>
            <person name="Castelli J.W."/>
            <person name="Stamey F.R."/>
            <person name="Dambaugh T.R."/>
            <person name="O'Brian J.J."/>
            <person name="Danovich R.M."/>
            <person name="Frenkel N."/>
            <person name="Pellett P.E."/>
        </authorList>
    </citation>
    <scope>NUCLEOTIDE SEQUENCE [GENOMIC DNA]</scope>
</reference>
<reference key="2">
    <citation type="journal article" date="1999" name="J. Virol.">
        <title>Human herpesvirus 6B genome sequence: coding content and comparison with human herpesvirus 6A.</title>
        <authorList>
            <person name="Dominguez G."/>
            <person name="Dambaugh T.R."/>
            <person name="Stamey F.R."/>
            <person name="Dewhurst S."/>
            <person name="Inoue N."/>
            <person name="Pellett P.E."/>
        </authorList>
    </citation>
    <scope>NUCLEOTIDE SEQUENCE [LARGE SCALE GENOMIC DNA]</scope>
</reference>
<sequence length="97" mass="10330">MAIGFIGSSPDAELSSENSRISSSVLLGCLLCCTDWSAVVPGKTETFRKPFVAIMIKKLKSCFAAYLSDLEQGSMCDMANASPTSLELGLSKLDKES</sequence>
<gene>
    <name type="primary">U83</name>
    <name type="synonym">CB11R</name>
</gene>
<feature type="signal peptide" evidence="2">
    <location>
        <begin position="1"/>
        <end status="unknown"/>
    </location>
</feature>
<feature type="chain" id="PRO_0000005247" description="Putative CC-type chemokine U83">
    <location>
        <begin status="unknown"/>
        <end position="97"/>
    </location>
</feature>
<feature type="disulfide bond" evidence="1">
    <location>
        <begin position="32"/>
        <end position="62"/>
    </location>
</feature>
<feature type="disulfide bond" evidence="1">
    <location>
        <begin position="33"/>
        <end position="76"/>
    </location>
</feature>
<comment type="similarity">
    <text evidence="3">Belongs to the intercrine beta (chemokine CC) family. Highly divergent.</text>
</comment>
<comment type="sequence caution" evidence="3">
    <conflict type="erroneous initiation">
        <sequence resource="EMBL-CDS" id="AAB06367"/>
    </conflict>
</comment>
<organismHost>
    <name type="scientific">Homo sapiens</name>
    <name type="common">Human</name>
    <dbReference type="NCBI Taxonomy" id="9606"/>
</organismHost>
<proteinExistence type="inferred from homology"/>
<keyword id="KW-0202">Cytokine</keyword>
<keyword id="KW-1015">Disulfide bond</keyword>
<keyword id="KW-1185">Reference proteome</keyword>
<keyword id="KW-0732">Signal</keyword>
<accession>P52461</accession>
<name>CCU83_HHV6Z</name>
<protein>
    <recommendedName>
        <fullName>Putative CC-type chemokine U83</fullName>
    </recommendedName>
</protein>
<organism>
    <name type="scientific">Human herpesvirus 6B (strain Z29)</name>
    <name type="common">HHV-6 variant B</name>
    <name type="synonym">Human B lymphotropic virus</name>
    <dbReference type="NCBI Taxonomy" id="36351"/>
    <lineage>
        <taxon>Viruses</taxon>
        <taxon>Duplodnaviria</taxon>
        <taxon>Heunggongvirae</taxon>
        <taxon>Peploviricota</taxon>
        <taxon>Herviviricetes</taxon>
        <taxon>Herpesvirales</taxon>
        <taxon>Orthoherpesviridae</taxon>
        <taxon>Betaherpesvirinae</taxon>
        <taxon>Roseolovirus</taxon>
        <taxon>Roseolovirus humanbeta6b</taxon>
        <taxon>Human herpesvirus 6B</taxon>
    </lineage>
</organism>
<dbReference type="EMBL" id="AF157706">
    <property type="protein sequence ID" value="AAB06367.1"/>
    <property type="status" value="ALT_INIT"/>
    <property type="molecule type" value="Genomic_DNA"/>
</dbReference>
<dbReference type="RefSeq" id="NP_050262.1">
    <property type="nucleotide sequence ID" value="NC_000898.1"/>
</dbReference>
<dbReference type="DNASU" id="1497083"/>
<dbReference type="GeneID" id="1497083"/>
<dbReference type="KEGG" id="vg:1497083"/>
<dbReference type="Proteomes" id="UP000006930">
    <property type="component" value="Segment"/>
</dbReference>
<dbReference type="GO" id="GO:0005615">
    <property type="term" value="C:extracellular space"/>
    <property type="evidence" value="ECO:0007669"/>
    <property type="project" value="UniProtKB-KW"/>
</dbReference>
<dbReference type="GO" id="GO:0008009">
    <property type="term" value="F:chemokine activity"/>
    <property type="evidence" value="ECO:0000314"/>
    <property type="project" value="CACAO"/>
</dbReference>
<dbReference type="InterPro" id="IPR035347">
    <property type="entry name" value="Putative_chemo_U83"/>
</dbReference>
<dbReference type="Pfam" id="PF17465">
    <property type="entry name" value="U83"/>
    <property type="match status" value="1"/>
</dbReference>